<proteinExistence type="evidence at transcript level"/>
<protein>
    <recommendedName>
        <fullName evidence="2">Small integral membrane protein 34</fullName>
    </recommendedName>
</protein>
<gene>
    <name evidence="3" type="primary">SMIM34</name>
    <name type="synonym">SMIM34A</name>
</gene>
<organism>
    <name type="scientific">Homo sapiens</name>
    <name type="common">Human</name>
    <dbReference type="NCBI Taxonomy" id="9606"/>
    <lineage>
        <taxon>Eukaryota</taxon>
        <taxon>Metazoa</taxon>
        <taxon>Chordata</taxon>
        <taxon>Craniata</taxon>
        <taxon>Vertebrata</taxon>
        <taxon>Euteleostomi</taxon>
        <taxon>Mammalia</taxon>
        <taxon>Eutheria</taxon>
        <taxon>Euarchontoglires</taxon>
        <taxon>Primates</taxon>
        <taxon>Haplorrhini</taxon>
        <taxon>Catarrhini</taxon>
        <taxon>Hominidae</taxon>
        <taxon>Homo</taxon>
    </lineage>
</organism>
<keyword id="KW-0472">Membrane</keyword>
<keyword id="KW-1185">Reference proteome</keyword>
<keyword id="KW-0812">Transmembrane</keyword>
<keyword id="KW-1133">Transmembrane helix</keyword>
<reference key="1">
    <citation type="journal article" date="2000" name="Nature">
        <title>The DNA sequence of human chromosome 21.</title>
        <authorList>
            <person name="Hattori M."/>
            <person name="Fujiyama A."/>
            <person name="Taylor T.D."/>
            <person name="Watanabe H."/>
            <person name="Yada T."/>
            <person name="Park H.-S."/>
            <person name="Toyoda A."/>
            <person name="Ishii K."/>
            <person name="Totoki Y."/>
            <person name="Choi D.-K."/>
            <person name="Groner Y."/>
            <person name="Soeda E."/>
            <person name="Ohki M."/>
            <person name="Takagi T."/>
            <person name="Sakaki Y."/>
            <person name="Taudien S."/>
            <person name="Blechschmidt K."/>
            <person name="Polley A."/>
            <person name="Menzel U."/>
            <person name="Delabar J."/>
            <person name="Kumpf K."/>
            <person name="Lehmann R."/>
            <person name="Patterson D."/>
            <person name="Reichwald K."/>
            <person name="Rump A."/>
            <person name="Schillhabel M."/>
            <person name="Schudy A."/>
            <person name="Zimmermann W."/>
            <person name="Rosenthal A."/>
            <person name="Kudoh J."/>
            <person name="Shibuya K."/>
            <person name="Kawasaki K."/>
            <person name="Asakawa S."/>
            <person name="Shintani A."/>
            <person name="Sasaki T."/>
            <person name="Nagamine K."/>
            <person name="Mitsuyama S."/>
            <person name="Antonarakis S.E."/>
            <person name="Minoshima S."/>
            <person name="Shimizu N."/>
            <person name="Nordsiek G."/>
            <person name="Hornischer K."/>
            <person name="Brandt P."/>
            <person name="Scharfe M."/>
            <person name="Schoen O."/>
            <person name="Desario A."/>
            <person name="Reichelt J."/>
            <person name="Kauer G."/>
            <person name="Bloecker H."/>
            <person name="Ramser J."/>
            <person name="Beck A."/>
            <person name="Klages S."/>
            <person name="Hennig S."/>
            <person name="Riesselmann L."/>
            <person name="Dagand E."/>
            <person name="Wehrmeyer S."/>
            <person name="Borzym K."/>
            <person name="Gardiner K."/>
            <person name="Nizetic D."/>
            <person name="Francis F."/>
            <person name="Lehrach H."/>
            <person name="Reinhardt R."/>
            <person name="Yaspo M.-L."/>
        </authorList>
    </citation>
    <scope>NUCLEOTIDE SEQUENCE [LARGE SCALE GENOMIC DNA]</scope>
</reference>
<reference key="2">
    <citation type="journal article" date="2004" name="Genome Res.">
        <title>The status, quality, and expansion of the NIH full-length cDNA project: the Mammalian Gene Collection (MGC).</title>
        <authorList>
            <consortium name="The MGC Project Team"/>
        </authorList>
    </citation>
    <scope>NUCLEOTIDE SEQUENCE [LARGE SCALE MRNA]</scope>
</reference>
<sequence>MEWAKWTPHEASNQTQASTLLGLLLGDHTEGRNDTNSTRALKVPDGTSAAWYILTIIGIYAVIFVFRLASNILRKNDKSLEDVYYSNLTSELKMTGLQGKVAKCSTLSISNRAVLQPCQAHLGAKGGSSGPQTATPETP</sequence>
<accession>A8MWV9</accession>
<dbReference type="EMBL" id="AP000322">
    <property type="status" value="NOT_ANNOTATED_CDS"/>
    <property type="molecule type" value="Genomic_DNA"/>
</dbReference>
<dbReference type="EMBL" id="BC049386">
    <property type="status" value="NOT_ANNOTATED_CDS"/>
    <property type="molecule type" value="mRNA"/>
</dbReference>
<dbReference type="CCDS" id="CCDS93093.1"/>
<dbReference type="RefSeq" id="NP_001354277.1">
    <property type="nucleotide sequence ID" value="NM_001367348.2"/>
</dbReference>
<dbReference type="RefSeq" id="XP_006724011.1">
    <property type="nucleotide sequence ID" value="XM_006723948.3"/>
</dbReference>
<dbReference type="RefSeq" id="XP_011507198.1">
    <property type="nucleotide sequence ID" value="XM_011508896.2"/>
</dbReference>
<dbReference type="RefSeq" id="XP_016884011.1">
    <property type="nucleotide sequence ID" value="XM_017028522.1"/>
</dbReference>
<dbReference type="SMR" id="A8MWV9"/>
<dbReference type="STRING" id="9606.ENSP00000397039"/>
<dbReference type="BioMuta" id="-"/>
<dbReference type="PaxDb" id="9606-ENSP00000397039"/>
<dbReference type="PeptideAtlas" id="A8MWV9"/>
<dbReference type="Antibodypedia" id="49026">
    <property type="antibodies" value="4 antibodies from 4 providers"/>
</dbReference>
<dbReference type="Ensembl" id="ENST00000450895.2">
    <property type="protein sequence ID" value="ENSP00000397039.2"/>
    <property type="gene ID" value="ENSG00000243627.6"/>
</dbReference>
<dbReference type="Ensembl" id="ENST00000850648.1">
    <property type="protein sequence ID" value="ENSP00000520926.1"/>
    <property type="gene ID" value="ENSG00000243627.6"/>
</dbReference>
<dbReference type="GeneID" id="388820"/>
<dbReference type="MANE-Select" id="ENST00000450895.2">
    <property type="protein sequence ID" value="ENSP00000397039.2"/>
    <property type="RefSeq nucleotide sequence ID" value="NM_001367348.2"/>
    <property type="RefSeq protein sequence ID" value="NP_001354277.1"/>
</dbReference>
<dbReference type="UCSC" id="uc002yty.3">
    <property type="organism name" value="human"/>
</dbReference>
<dbReference type="AGR" id="HGNC:39601"/>
<dbReference type="GeneCards" id="SMIM34"/>
<dbReference type="HGNC" id="HGNC:39601">
    <property type="gene designation" value="SMIM34"/>
</dbReference>
<dbReference type="HPA" id="ENSG00000243627">
    <property type="expression patterns" value="Tissue enhanced (kidney)"/>
</dbReference>
<dbReference type="neXtProt" id="NX_A8MWV9"/>
<dbReference type="VEuPathDB" id="HostDB:ENSG00000243627"/>
<dbReference type="eggNOG" id="ENOG502TABH">
    <property type="taxonomic scope" value="Eukaryota"/>
</dbReference>
<dbReference type="GeneTree" id="ENSGT00490000044099"/>
<dbReference type="HOGENOM" id="CLU_1844479_0_0_1"/>
<dbReference type="InParanoid" id="A8MWV9"/>
<dbReference type="OMA" id="QSKVAKC"/>
<dbReference type="OrthoDB" id="9451525at2759"/>
<dbReference type="PAN-GO" id="A8MWV9">
    <property type="GO annotations" value="0 GO annotations based on evolutionary models"/>
</dbReference>
<dbReference type="PhylomeDB" id="A8MWV9"/>
<dbReference type="BioGRID-ORCS" id="388820">
    <property type="hits" value="0 hits in 4 CRISPR screens"/>
</dbReference>
<dbReference type="Pharos" id="A8MWV9">
    <property type="development level" value="Tdark"/>
</dbReference>
<dbReference type="PRO" id="PR:A8MWV9"/>
<dbReference type="Proteomes" id="UP000005640">
    <property type="component" value="Chromosome 21"/>
</dbReference>
<dbReference type="RNAct" id="A8MWV9">
    <property type="molecule type" value="protein"/>
</dbReference>
<dbReference type="Bgee" id="ENSG00000243627">
    <property type="expression patterns" value="Expressed in olfactory segment of nasal mucosa and 79 other cell types or tissues"/>
</dbReference>
<dbReference type="GO" id="GO:0016020">
    <property type="term" value="C:membrane"/>
    <property type="evidence" value="ECO:0007669"/>
    <property type="project" value="UniProtKB-SubCell"/>
</dbReference>
<name>SM34A_HUMAN</name>
<feature type="chain" id="PRO_0000348245" description="Small integral membrane protein 34">
    <location>
        <begin position="1"/>
        <end position="139"/>
    </location>
</feature>
<feature type="transmembrane region" description="Helical" evidence="1">
    <location>
        <begin position="46"/>
        <end position="66"/>
    </location>
</feature>
<comment type="subcellular location">
    <subcellularLocation>
        <location evidence="2">Membrane</location>
        <topology evidence="2">Single-pass membrane protein</topology>
    </subcellularLocation>
</comment>
<evidence type="ECO:0000255" key="1"/>
<evidence type="ECO:0000305" key="2"/>
<evidence type="ECO:0000312" key="3">
    <source>
        <dbReference type="HGNC" id="HGNC:39601"/>
    </source>
</evidence>